<accession>Q8YHN7</accession>
<gene>
    <name evidence="1" type="primary">rplB</name>
    <name type="ordered locus">BMEI0760</name>
</gene>
<organism>
    <name type="scientific">Brucella melitensis biotype 1 (strain ATCC 23456 / CCUG 17765 / NCTC 10094 / 16M)</name>
    <dbReference type="NCBI Taxonomy" id="224914"/>
    <lineage>
        <taxon>Bacteria</taxon>
        <taxon>Pseudomonadati</taxon>
        <taxon>Pseudomonadota</taxon>
        <taxon>Alphaproteobacteria</taxon>
        <taxon>Hyphomicrobiales</taxon>
        <taxon>Brucellaceae</taxon>
        <taxon>Brucella/Ochrobactrum group</taxon>
        <taxon>Brucella</taxon>
    </lineage>
</organism>
<feature type="chain" id="PRO_0000129537" description="Large ribosomal subunit protein uL2">
    <location>
        <begin position="1"/>
        <end position="277"/>
    </location>
</feature>
<feature type="region of interest" description="Disordered" evidence="2">
    <location>
        <begin position="222"/>
        <end position="277"/>
    </location>
</feature>
<comment type="function">
    <text evidence="1">One of the primary rRNA binding proteins. Required for association of the 30S and 50S subunits to form the 70S ribosome, for tRNA binding and peptide bond formation. It has been suggested to have peptidyltransferase activity; this is somewhat controversial. Makes several contacts with the 16S rRNA in the 70S ribosome.</text>
</comment>
<comment type="subunit">
    <text evidence="1">Part of the 50S ribosomal subunit. Forms a bridge to the 30S subunit in the 70S ribosome.</text>
</comment>
<comment type="similarity">
    <text evidence="1">Belongs to the universal ribosomal protein uL2 family.</text>
</comment>
<keyword id="KW-0687">Ribonucleoprotein</keyword>
<keyword id="KW-0689">Ribosomal protein</keyword>
<keyword id="KW-0694">RNA-binding</keyword>
<keyword id="KW-0699">rRNA-binding</keyword>
<dbReference type="EMBL" id="AE008917">
    <property type="protein sequence ID" value="AAL51941.1"/>
    <property type="molecule type" value="Genomic_DNA"/>
</dbReference>
<dbReference type="PIR" id="AB3347">
    <property type="entry name" value="AB3347"/>
</dbReference>
<dbReference type="RefSeq" id="WP_004683925.1">
    <property type="nucleotide sequence ID" value="NC_003317.1"/>
</dbReference>
<dbReference type="SMR" id="Q8YHN7"/>
<dbReference type="GeneID" id="29593563"/>
<dbReference type="KEGG" id="bme:BMEI0760"/>
<dbReference type="KEGG" id="bmel:DK63_662"/>
<dbReference type="PATRIC" id="fig|224914.52.peg.693"/>
<dbReference type="eggNOG" id="COG0090">
    <property type="taxonomic scope" value="Bacteria"/>
</dbReference>
<dbReference type="PhylomeDB" id="Q8YHN7"/>
<dbReference type="Proteomes" id="UP000000419">
    <property type="component" value="Chromosome I"/>
</dbReference>
<dbReference type="GO" id="GO:0015934">
    <property type="term" value="C:large ribosomal subunit"/>
    <property type="evidence" value="ECO:0007669"/>
    <property type="project" value="InterPro"/>
</dbReference>
<dbReference type="GO" id="GO:0019843">
    <property type="term" value="F:rRNA binding"/>
    <property type="evidence" value="ECO:0007669"/>
    <property type="project" value="UniProtKB-UniRule"/>
</dbReference>
<dbReference type="GO" id="GO:0003735">
    <property type="term" value="F:structural constituent of ribosome"/>
    <property type="evidence" value="ECO:0007669"/>
    <property type="project" value="InterPro"/>
</dbReference>
<dbReference type="GO" id="GO:0016740">
    <property type="term" value="F:transferase activity"/>
    <property type="evidence" value="ECO:0007669"/>
    <property type="project" value="InterPro"/>
</dbReference>
<dbReference type="GO" id="GO:0002181">
    <property type="term" value="P:cytoplasmic translation"/>
    <property type="evidence" value="ECO:0007669"/>
    <property type="project" value="TreeGrafter"/>
</dbReference>
<dbReference type="FunFam" id="2.30.30.30:FF:000055">
    <property type="entry name" value="50S ribosomal protein L2"/>
    <property type="match status" value="1"/>
</dbReference>
<dbReference type="FunFam" id="2.40.50.140:FF:000003">
    <property type="entry name" value="50S ribosomal protein L2"/>
    <property type="match status" value="1"/>
</dbReference>
<dbReference type="FunFam" id="4.10.950.10:FF:000001">
    <property type="entry name" value="50S ribosomal protein L2"/>
    <property type="match status" value="1"/>
</dbReference>
<dbReference type="Gene3D" id="2.30.30.30">
    <property type="match status" value="1"/>
</dbReference>
<dbReference type="Gene3D" id="2.40.50.140">
    <property type="entry name" value="Nucleic acid-binding proteins"/>
    <property type="match status" value="1"/>
</dbReference>
<dbReference type="Gene3D" id="4.10.950.10">
    <property type="entry name" value="Ribosomal protein L2, domain 3"/>
    <property type="match status" value="1"/>
</dbReference>
<dbReference type="HAMAP" id="MF_01320_B">
    <property type="entry name" value="Ribosomal_uL2_B"/>
    <property type="match status" value="1"/>
</dbReference>
<dbReference type="InterPro" id="IPR012340">
    <property type="entry name" value="NA-bd_OB-fold"/>
</dbReference>
<dbReference type="InterPro" id="IPR014722">
    <property type="entry name" value="Rib_uL2_dom2"/>
</dbReference>
<dbReference type="InterPro" id="IPR002171">
    <property type="entry name" value="Ribosomal_uL2"/>
</dbReference>
<dbReference type="InterPro" id="IPR005880">
    <property type="entry name" value="Ribosomal_uL2_bac/org-type"/>
</dbReference>
<dbReference type="InterPro" id="IPR022669">
    <property type="entry name" value="Ribosomal_uL2_C"/>
</dbReference>
<dbReference type="InterPro" id="IPR022671">
    <property type="entry name" value="Ribosomal_uL2_CS"/>
</dbReference>
<dbReference type="InterPro" id="IPR014726">
    <property type="entry name" value="Ribosomal_uL2_dom3"/>
</dbReference>
<dbReference type="InterPro" id="IPR022666">
    <property type="entry name" value="Ribosomal_uL2_RNA-bd_dom"/>
</dbReference>
<dbReference type="InterPro" id="IPR008991">
    <property type="entry name" value="Translation_prot_SH3-like_sf"/>
</dbReference>
<dbReference type="NCBIfam" id="TIGR01171">
    <property type="entry name" value="rplB_bact"/>
    <property type="match status" value="1"/>
</dbReference>
<dbReference type="PANTHER" id="PTHR13691:SF5">
    <property type="entry name" value="LARGE RIBOSOMAL SUBUNIT PROTEIN UL2M"/>
    <property type="match status" value="1"/>
</dbReference>
<dbReference type="PANTHER" id="PTHR13691">
    <property type="entry name" value="RIBOSOMAL PROTEIN L2"/>
    <property type="match status" value="1"/>
</dbReference>
<dbReference type="Pfam" id="PF00181">
    <property type="entry name" value="Ribosomal_L2"/>
    <property type="match status" value="1"/>
</dbReference>
<dbReference type="Pfam" id="PF03947">
    <property type="entry name" value="Ribosomal_L2_C"/>
    <property type="match status" value="1"/>
</dbReference>
<dbReference type="PIRSF" id="PIRSF002158">
    <property type="entry name" value="Ribosomal_L2"/>
    <property type="match status" value="1"/>
</dbReference>
<dbReference type="SMART" id="SM01383">
    <property type="entry name" value="Ribosomal_L2"/>
    <property type="match status" value="1"/>
</dbReference>
<dbReference type="SMART" id="SM01382">
    <property type="entry name" value="Ribosomal_L2_C"/>
    <property type="match status" value="1"/>
</dbReference>
<dbReference type="SUPFAM" id="SSF50249">
    <property type="entry name" value="Nucleic acid-binding proteins"/>
    <property type="match status" value="1"/>
</dbReference>
<dbReference type="SUPFAM" id="SSF50104">
    <property type="entry name" value="Translation proteins SH3-like domain"/>
    <property type="match status" value="1"/>
</dbReference>
<dbReference type="PROSITE" id="PS00467">
    <property type="entry name" value="RIBOSOMAL_L2"/>
    <property type="match status" value="1"/>
</dbReference>
<proteinExistence type="inferred from homology"/>
<protein>
    <recommendedName>
        <fullName evidence="1">Large ribosomal subunit protein uL2</fullName>
    </recommendedName>
    <alternativeName>
        <fullName evidence="3">50S ribosomal protein L2</fullName>
    </alternativeName>
</protein>
<evidence type="ECO:0000255" key="1">
    <source>
        <dbReference type="HAMAP-Rule" id="MF_01320"/>
    </source>
</evidence>
<evidence type="ECO:0000256" key="2">
    <source>
        <dbReference type="SAM" id="MobiDB-lite"/>
    </source>
</evidence>
<evidence type="ECO:0000305" key="3"/>
<reference key="1">
    <citation type="journal article" date="2002" name="Proc. Natl. Acad. Sci. U.S.A.">
        <title>The genome sequence of the facultative intracellular pathogen Brucella melitensis.</title>
        <authorList>
            <person name="DelVecchio V.G."/>
            <person name="Kapatral V."/>
            <person name="Redkar R.J."/>
            <person name="Patra G."/>
            <person name="Mujer C."/>
            <person name="Los T."/>
            <person name="Ivanova N."/>
            <person name="Anderson I."/>
            <person name="Bhattacharyya A."/>
            <person name="Lykidis A."/>
            <person name="Reznik G."/>
            <person name="Jablonski L."/>
            <person name="Larsen N."/>
            <person name="D'Souza M."/>
            <person name="Bernal A."/>
            <person name="Mazur M."/>
            <person name="Goltsman E."/>
            <person name="Selkov E."/>
            <person name="Elzer P.H."/>
            <person name="Hagius S."/>
            <person name="O'Callaghan D."/>
            <person name="Letesson J.-J."/>
            <person name="Haselkorn R."/>
            <person name="Kyrpides N.C."/>
            <person name="Overbeek R."/>
        </authorList>
    </citation>
    <scope>NUCLEOTIDE SEQUENCE [LARGE SCALE GENOMIC DNA]</scope>
    <source>
        <strain>ATCC 23456 / CCUG 17765 / NCTC 10094 / 16M</strain>
    </source>
</reference>
<name>RL2_BRUME</name>
<sequence>MALKHFNPITPGQRQLVIVDRSELYKGKPVKSLTEGLSKKGGRNNTGRITVRFQGGGHKRSYRFIDFKRRKLDVVGTVERLEYDPNRTAFIALIRYTDGELAYILAPQRLAVGDQVVAGNSVDVKPGNAMPLSSMPVGTIIHNVELMPGKGGQIARSAGTYAQLVGRDQGMAILRLNSGEQRLVSGACFASVGAVSNPDHGNINDGKAGRSVWRGKRPHVRGVAMNPVDHPHGGGEGRTSGGRHPVTPWGKPTKGKKTRSNKATDKFIMRSRHQRKK</sequence>